<accession>Q5NID4</accession>
<comment type="function">
    <text evidence="1">Forms part of the ribosomal stalk, playing a central role in the interaction of the ribosome with GTP-bound translation factors.</text>
</comment>
<comment type="subunit">
    <text evidence="1">Part of the ribosomal stalk of the 50S ribosomal subunit. The N-terminus interacts with L11 and the large rRNA to form the base of the stalk. The C-terminus forms an elongated spine to which L12 dimers bind in a sequential fashion forming a multimeric L10(L12)X complex.</text>
</comment>
<comment type="similarity">
    <text evidence="1">Belongs to the universal ribosomal protein uL10 family.</text>
</comment>
<evidence type="ECO:0000255" key="1">
    <source>
        <dbReference type="HAMAP-Rule" id="MF_00362"/>
    </source>
</evidence>
<evidence type="ECO:0000305" key="2"/>
<gene>
    <name evidence="1" type="primary">rplJ</name>
    <name type="ordered locus">FTT_0142</name>
</gene>
<organism>
    <name type="scientific">Francisella tularensis subsp. tularensis (strain SCHU S4 / Schu 4)</name>
    <dbReference type="NCBI Taxonomy" id="177416"/>
    <lineage>
        <taxon>Bacteria</taxon>
        <taxon>Pseudomonadati</taxon>
        <taxon>Pseudomonadota</taxon>
        <taxon>Gammaproteobacteria</taxon>
        <taxon>Thiotrichales</taxon>
        <taxon>Francisellaceae</taxon>
        <taxon>Francisella</taxon>
    </lineage>
</organism>
<sequence length="172" mass="18719">MALRIEDKKAIVAEVAEQVSSALSAAVADYRGLTVNEMTSLRKQARESGVYLRVVRNNLARLAIKGTEFECLADALKGPLVLALSKDEPGAAAKLFKNFQKDHNAFEVKNLAMSGELFGPEKLDDFAKLPTREEALATLLNVMQAPVTKFVRTLNEIPSQAVRVFAAVGDSK</sequence>
<keyword id="KW-1185">Reference proteome</keyword>
<keyword id="KW-0687">Ribonucleoprotein</keyword>
<keyword id="KW-0689">Ribosomal protein</keyword>
<keyword id="KW-0694">RNA-binding</keyword>
<keyword id="KW-0699">rRNA-binding</keyword>
<protein>
    <recommendedName>
        <fullName evidence="1">Large ribosomal subunit protein uL10</fullName>
    </recommendedName>
    <alternativeName>
        <fullName evidence="2">50S ribosomal protein L10</fullName>
    </alternativeName>
</protein>
<dbReference type="EMBL" id="AJ749949">
    <property type="protein sequence ID" value="CAG44775.1"/>
    <property type="molecule type" value="Genomic_DNA"/>
</dbReference>
<dbReference type="RefSeq" id="WP_003023073.1">
    <property type="nucleotide sequence ID" value="NZ_CP010290.1"/>
</dbReference>
<dbReference type="RefSeq" id="YP_169208.1">
    <property type="nucleotide sequence ID" value="NC_006570.2"/>
</dbReference>
<dbReference type="SMR" id="Q5NID4"/>
<dbReference type="STRING" id="177416.FTT_0142"/>
<dbReference type="DNASU" id="3192015"/>
<dbReference type="EnsemblBacteria" id="CAG44775">
    <property type="protein sequence ID" value="CAG44775"/>
    <property type="gene ID" value="FTT_0142"/>
</dbReference>
<dbReference type="GeneID" id="75264698"/>
<dbReference type="KEGG" id="ftu:FTT_0142"/>
<dbReference type="eggNOG" id="COG0244">
    <property type="taxonomic scope" value="Bacteria"/>
</dbReference>
<dbReference type="OrthoDB" id="9808307at2"/>
<dbReference type="Proteomes" id="UP000001174">
    <property type="component" value="Chromosome"/>
</dbReference>
<dbReference type="GO" id="GO:1990904">
    <property type="term" value="C:ribonucleoprotein complex"/>
    <property type="evidence" value="ECO:0007669"/>
    <property type="project" value="UniProtKB-KW"/>
</dbReference>
<dbReference type="GO" id="GO:0005840">
    <property type="term" value="C:ribosome"/>
    <property type="evidence" value="ECO:0007669"/>
    <property type="project" value="UniProtKB-KW"/>
</dbReference>
<dbReference type="GO" id="GO:0070180">
    <property type="term" value="F:large ribosomal subunit rRNA binding"/>
    <property type="evidence" value="ECO:0007669"/>
    <property type="project" value="UniProtKB-UniRule"/>
</dbReference>
<dbReference type="GO" id="GO:0006412">
    <property type="term" value="P:translation"/>
    <property type="evidence" value="ECO:0007669"/>
    <property type="project" value="UniProtKB-UniRule"/>
</dbReference>
<dbReference type="CDD" id="cd05797">
    <property type="entry name" value="Ribosomal_L10"/>
    <property type="match status" value="1"/>
</dbReference>
<dbReference type="Gene3D" id="3.30.70.1730">
    <property type="match status" value="1"/>
</dbReference>
<dbReference type="Gene3D" id="6.10.250.290">
    <property type="match status" value="1"/>
</dbReference>
<dbReference type="HAMAP" id="MF_00362">
    <property type="entry name" value="Ribosomal_uL10"/>
    <property type="match status" value="1"/>
</dbReference>
<dbReference type="InterPro" id="IPR001790">
    <property type="entry name" value="Ribosomal_uL10"/>
</dbReference>
<dbReference type="InterPro" id="IPR043141">
    <property type="entry name" value="Ribosomal_uL10-like_sf"/>
</dbReference>
<dbReference type="InterPro" id="IPR022973">
    <property type="entry name" value="Ribosomal_uL10_bac"/>
</dbReference>
<dbReference type="InterPro" id="IPR047865">
    <property type="entry name" value="Ribosomal_uL10_bac_type"/>
</dbReference>
<dbReference type="NCBIfam" id="NF000955">
    <property type="entry name" value="PRK00099.1-1"/>
    <property type="match status" value="1"/>
</dbReference>
<dbReference type="PANTHER" id="PTHR11560">
    <property type="entry name" value="39S RIBOSOMAL PROTEIN L10, MITOCHONDRIAL"/>
    <property type="match status" value="1"/>
</dbReference>
<dbReference type="Pfam" id="PF00466">
    <property type="entry name" value="Ribosomal_L10"/>
    <property type="match status" value="1"/>
</dbReference>
<dbReference type="SUPFAM" id="SSF160369">
    <property type="entry name" value="Ribosomal protein L10-like"/>
    <property type="match status" value="1"/>
</dbReference>
<name>RL10_FRATT</name>
<reference key="1">
    <citation type="journal article" date="2005" name="Nat. Genet.">
        <title>The complete genome sequence of Francisella tularensis, the causative agent of tularemia.</title>
        <authorList>
            <person name="Larsson P."/>
            <person name="Oyston P.C.F."/>
            <person name="Chain P."/>
            <person name="Chu M.C."/>
            <person name="Duffield M."/>
            <person name="Fuxelius H.-H."/>
            <person name="Garcia E."/>
            <person name="Haelltorp G."/>
            <person name="Johansson D."/>
            <person name="Isherwood K.E."/>
            <person name="Karp P.D."/>
            <person name="Larsson E."/>
            <person name="Liu Y."/>
            <person name="Michell S."/>
            <person name="Prior J."/>
            <person name="Prior R."/>
            <person name="Malfatti S."/>
            <person name="Sjoestedt A."/>
            <person name="Svensson K."/>
            <person name="Thompson N."/>
            <person name="Vergez L."/>
            <person name="Wagg J.K."/>
            <person name="Wren B.W."/>
            <person name="Lindler L.E."/>
            <person name="Andersson S.G.E."/>
            <person name="Forsman M."/>
            <person name="Titball R.W."/>
        </authorList>
    </citation>
    <scope>NUCLEOTIDE SEQUENCE [LARGE SCALE GENOMIC DNA]</scope>
    <source>
        <strain>SCHU S4 / Schu 4</strain>
    </source>
</reference>
<proteinExistence type="inferred from homology"/>
<feature type="chain" id="PRO_0000154633" description="Large ribosomal subunit protein uL10">
    <location>
        <begin position="1"/>
        <end position="172"/>
    </location>
</feature>